<name>RSMA_POLSJ</name>
<reference key="1">
    <citation type="journal article" date="2008" name="Appl. Environ. Microbiol.">
        <title>The genome of Polaromonas sp. strain JS666: insights into the evolution of a hydrocarbon- and xenobiotic-degrading bacterium, and features of relevance to biotechnology.</title>
        <authorList>
            <person name="Mattes T.E."/>
            <person name="Alexander A.K."/>
            <person name="Richardson P.M."/>
            <person name="Munk A.C."/>
            <person name="Han C.S."/>
            <person name="Stothard P."/>
            <person name="Coleman N.V."/>
        </authorList>
    </citation>
    <scope>NUCLEOTIDE SEQUENCE [LARGE SCALE GENOMIC DNA]</scope>
    <source>
        <strain>JS666 / ATCC BAA-500</strain>
    </source>
</reference>
<organism>
    <name type="scientific">Polaromonas sp. (strain JS666 / ATCC BAA-500)</name>
    <dbReference type="NCBI Taxonomy" id="296591"/>
    <lineage>
        <taxon>Bacteria</taxon>
        <taxon>Pseudomonadati</taxon>
        <taxon>Pseudomonadota</taxon>
        <taxon>Betaproteobacteria</taxon>
        <taxon>Burkholderiales</taxon>
        <taxon>Comamonadaceae</taxon>
        <taxon>Polaromonas</taxon>
    </lineage>
</organism>
<feature type="chain" id="PRO_0000257318" description="Ribosomal RNA small subunit methyltransferase A">
    <location>
        <begin position="1"/>
        <end position="330"/>
    </location>
</feature>
<feature type="region of interest" description="Disordered" evidence="2">
    <location>
        <begin position="115"/>
        <end position="158"/>
    </location>
</feature>
<feature type="binding site" evidence="1">
    <location>
        <position position="29"/>
    </location>
    <ligand>
        <name>S-adenosyl-L-methionine</name>
        <dbReference type="ChEBI" id="CHEBI:59789"/>
    </ligand>
</feature>
<feature type="binding site" evidence="1">
    <location>
        <position position="31"/>
    </location>
    <ligand>
        <name>S-adenosyl-L-methionine</name>
        <dbReference type="ChEBI" id="CHEBI:59789"/>
    </ligand>
</feature>
<feature type="binding site" evidence="1">
    <location>
        <position position="56"/>
    </location>
    <ligand>
        <name>S-adenosyl-L-methionine</name>
        <dbReference type="ChEBI" id="CHEBI:59789"/>
    </ligand>
</feature>
<feature type="binding site" evidence="1">
    <location>
        <position position="77"/>
    </location>
    <ligand>
        <name>S-adenosyl-L-methionine</name>
        <dbReference type="ChEBI" id="CHEBI:59789"/>
    </ligand>
</feature>
<feature type="binding site" evidence="1">
    <location>
        <position position="98"/>
    </location>
    <ligand>
        <name>S-adenosyl-L-methionine</name>
        <dbReference type="ChEBI" id="CHEBI:59789"/>
    </ligand>
</feature>
<feature type="binding site" evidence="1">
    <location>
        <position position="177"/>
    </location>
    <ligand>
        <name>S-adenosyl-L-methionine</name>
        <dbReference type="ChEBI" id="CHEBI:59789"/>
    </ligand>
</feature>
<sequence>MLEPVGERPQLWRAELIVKHIPRKRFGQHFLTDQGIIEGIVQAIAPRAGQAVVEIGPGLAALTQPLVERLGHLTVIELDRDLAQQLRAHPQLTVVESDVLKVDFRQLAERLQHGPVRSAGLPQAETAPKGLEPAGSSSQQGPRDWLRQTAGAAAPSRGSAVHEVTSVGAHKLRVVGNLPYNISTPILFHLLDAVDVIEDQHFMLQKEVIDRMVAAPSTSDYGRLSVMLQWRYAMENVLFVPPQSFDPPPRVDSAVVRMVPHAHPAALDVKLLSQLVQVAFSQRRKLLRHTLGQWLTARGFPGAFDVQRRAEEVPVAEYVALAQQVAAMAV</sequence>
<keyword id="KW-0963">Cytoplasm</keyword>
<keyword id="KW-0489">Methyltransferase</keyword>
<keyword id="KW-1185">Reference proteome</keyword>
<keyword id="KW-0694">RNA-binding</keyword>
<keyword id="KW-0698">rRNA processing</keyword>
<keyword id="KW-0949">S-adenosyl-L-methionine</keyword>
<keyword id="KW-0808">Transferase</keyword>
<proteinExistence type="inferred from homology"/>
<comment type="function">
    <text evidence="1">Specifically dimethylates two adjacent adenosines (A1518 and A1519) in the loop of a conserved hairpin near the 3'-end of 16S rRNA in the 30S particle. May play a critical role in biogenesis of 30S subunits.</text>
</comment>
<comment type="catalytic activity">
    <reaction evidence="1">
        <text>adenosine(1518)/adenosine(1519) in 16S rRNA + 4 S-adenosyl-L-methionine = N(6)-dimethyladenosine(1518)/N(6)-dimethyladenosine(1519) in 16S rRNA + 4 S-adenosyl-L-homocysteine + 4 H(+)</text>
        <dbReference type="Rhea" id="RHEA:19609"/>
        <dbReference type="Rhea" id="RHEA-COMP:10232"/>
        <dbReference type="Rhea" id="RHEA-COMP:10233"/>
        <dbReference type="ChEBI" id="CHEBI:15378"/>
        <dbReference type="ChEBI" id="CHEBI:57856"/>
        <dbReference type="ChEBI" id="CHEBI:59789"/>
        <dbReference type="ChEBI" id="CHEBI:74411"/>
        <dbReference type="ChEBI" id="CHEBI:74493"/>
        <dbReference type="EC" id="2.1.1.182"/>
    </reaction>
</comment>
<comment type="subcellular location">
    <subcellularLocation>
        <location evidence="1">Cytoplasm</location>
    </subcellularLocation>
</comment>
<comment type="similarity">
    <text evidence="1">Belongs to the class I-like SAM-binding methyltransferase superfamily. rRNA adenine N(6)-methyltransferase family. RsmA subfamily.</text>
</comment>
<gene>
    <name evidence="1" type="primary">rsmA</name>
    <name evidence="1" type="synonym">ksgA</name>
    <name type="ordered locus">Bpro_4861</name>
</gene>
<protein>
    <recommendedName>
        <fullName evidence="1">Ribosomal RNA small subunit methyltransferase A</fullName>
        <ecNumber evidence="1">2.1.1.182</ecNumber>
    </recommendedName>
    <alternativeName>
        <fullName evidence="1">16S rRNA (adenine(1518)-N(6)/adenine(1519)-N(6))-dimethyltransferase</fullName>
    </alternativeName>
    <alternativeName>
        <fullName evidence="1">16S rRNA dimethyladenosine transferase</fullName>
    </alternativeName>
    <alternativeName>
        <fullName evidence="1">16S rRNA dimethylase</fullName>
    </alternativeName>
    <alternativeName>
        <fullName evidence="1">S-adenosylmethionine-6-N', N'-adenosyl(rRNA) dimethyltransferase</fullName>
    </alternativeName>
</protein>
<dbReference type="EC" id="2.1.1.182" evidence="1"/>
<dbReference type="EMBL" id="CP000316">
    <property type="protein sequence ID" value="ABE46737.1"/>
    <property type="molecule type" value="Genomic_DNA"/>
</dbReference>
<dbReference type="SMR" id="Q121Q5"/>
<dbReference type="STRING" id="296591.Bpro_4861"/>
<dbReference type="KEGG" id="pol:Bpro_4861"/>
<dbReference type="eggNOG" id="COG0030">
    <property type="taxonomic scope" value="Bacteria"/>
</dbReference>
<dbReference type="HOGENOM" id="CLU_041220_0_1_4"/>
<dbReference type="Proteomes" id="UP000001983">
    <property type="component" value="Chromosome"/>
</dbReference>
<dbReference type="GO" id="GO:0005829">
    <property type="term" value="C:cytosol"/>
    <property type="evidence" value="ECO:0007669"/>
    <property type="project" value="TreeGrafter"/>
</dbReference>
<dbReference type="GO" id="GO:0052908">
    <property type="term" value="F:16S rRNA (adenine(1518)-N(6)/adenine(1519)-N(6))-dimethyltransferase activity"/>
    <property type="evidence" value="ECO:0007669"/>
    <property type="project" value="UniProtKB-EC"/>
</dbReference>
<dbReference type="GO" id="GO:0003723">
    <property type="term" value="F:RNA binding"/>
    <property type="evidence" value="ECO:0007669"/>
    <property type="project" value="UniProtKB-KW"/>
</dbReference>
<dbReference type="Gene3D" id="1.10.8.100">
    <property type="entry name" value="Ribosomal RNA adenine dimethylase-like, domain 2"/>
    <property type="match status" value="1"/>
</dbReference>
<dbReference type="Gene3D" id="3.40.50.150">
    <property type="entry name" value="Vaccinia Virus protein VP39"/>
    <property type="match status" value="1"/>
</dbReference>
<dbReference type="HAMAP" id="MF_00607">
    <property type="entry name" value="16SrRNA_methyltr_A"/>
    <property type="match status" value="1"/>
</dbReference>
<dbReference type="InterPro" id="IPR001737">
    <property type="entry name" value="KsgA/Erm"/>
</dbReference>
<dbReference type="InterPro" id="IPR023165">
    <property type="entry name" value="rRNA_Ade_diMease-like_C"/>
</dbReference>
<dbReference type="InterPro" id="IPR020596">
    <property type="entry name" value="rRNA_Ade_Mease_Trfase_CS"/>
</dbReference>
<dbReference type="InterPro" id="IPR020598">
    <property type="entry name" value="rRNA_Ade_methylase_Trfase_N"/>
</dbReference>
<dbReference type="InterPro" id="IPR011530">
    <property type="entry name" value="rRNA_adenine_dimethylase"/>
</dbReference>
<dbReference type="InterPro" id="IPR029063">
    <property type="entry name" value="SAM-dependent_MTases_sf"/>
</dbReference>
<dbReference type="PANTHER" id="PTHR11727">
    <property type="entry name" value="DIMETHYLADENOSINE TRANSFERASE"/>
    <property type="match status" value="1"/>
</dbReference>
<dbReference type="PANTHER" id="PTHR11727:SF7">
    <property type="entry name" value="DIMETHYLADENOSINE TRANSFERASE-RELATED"/>
    <property type="match status" value="1"/>
</dbReference>
<dbReference type="Pfam" id="PF00398">
    <property type="entry name" value="RrnaAD"/>
    <property type="match status" value="1"/>
</dbReference>
<dbReference type="SMART" id="SM00650">
    <property type="entry name" value="rADc"/>
    <property type="match status" value="1"/>
</dbReference>
<dbReference type="SUPFAM" id="SSF53335">
    <property type="entry name" value="S-adenosyl-L-methionine-dependent methyltransferases"/>
    <property type="match status" value="1"/>
</dbReference>
<dbReference type="PROSITE" id="PS01131">
    <property type="entry name" value="RRNA_A_DIMETH"/>
    <property type="match status" value="1"/>
</dbReference>
<dbReference type="PROSITE" id="PS51689">
    <property type="entry name" value="SAM_RNA_A_N6_MT"/>
    <property type="match status" value="1"/>
</dbReference>
<accession>Q121Q5</accession>
<evidence type="ECO:0000255" key="1">
    <source>
        <dbReference type="HAMAP-Rule" id="MF_00607"/>
    </source>
</evidence>
<evidence type="ECO:0000256" key="2">
    <source>
        <dbReference type="SAM" id="MobiDB-lite"/>
    </source>
</evidence>